<gene>
    <name type="primary">ACH1</name>
    <name type="ordered locus">CAGL0J04268g</name>
</gene>
<evidence type="ECO:0000250" key="1"/>
<evidence type="ECO:0000250" key="2">
    <source>
        <dbReference type="UniProtKB" id="B3EY95"/>
    </source>
</evidence>
<evidence type="ECO:0000305" key="3"/>
<name>ACH1_CANGA</name>
<reference key="1">
    <citation type="journal article" date="2004" name="Nature">
        <title>Genome evolution in yeasts.</title>
        <authorList>
            <person name="Dujon B."/>
            <person name="Sherman D."/>
            <person name="Fischer G."/>
            <person name="Durrens P."/>
            <person name="Casaregola S."/>
            <person name="Lafontaine I."/>
            <person name="de Montigny J."/>
            <person name="Marck C."/>
            <person name="Neuveglise C."/>
            <person name="Talla E."/>
            <person name="Goffard N."/>
            <person name="Frangeul L."/>
            <person name="Aigle M."/>
            <person name="Anthouard V."/>
            <person name="Babour A."/>
            <person name="Barbe V."/>
            <person name="Barnay S."/>
            <person name="Blanchin S."/>
            <person name="Beckerich J.-M."/>
            <person name="Beyne E."/>
            <person name="Bleykasten C."/>
            <person name="Boisrame A."/>
            <person name="Boyer J."/>
            <person name="Cattolico L."/>
            <person name="Confanioleri F."/>
            <person name="de Daruvar A."/>
            <person name="Despons L."/>
            <person name="Fabre E."/>
            <person name="Fairhead C."/>
            <person name="Ferry-Dumazet H."/>
            <person name="Groppi A."/>
            <person name="Hantraye F."/>
            <person name="Hennequin C."/>
            <person name="Jauniaux N."/>
            <person name="Joyet P."/>
            <person name="Kachouri R."/>
            <person name="Kerrest A."/>
            <person name="Koszul R."/>
            <person name="Lemaire M."/>
            <person name="Lesur I."/>
            <person name="Ma L."/>
            <person name="Muller H."/>
            <person name="Nicaud J.-M."/>
            <person name="Nikolski M."/>
            <person name="Oztas S."/>
            <person name="Ozier-Kalogeropoulos O."/>
            <person name="Pellenz S."/>
            <person name="Potier S."/>
            <person name="Richard G.-F."/>
            <person name="Straub M.-L."/>
            <person name="Suleau A."/>
            <person name="Swennen D."/>
            <person name="Tekaia F."/>
            <person name="Wesolowski-Louvel M."/>
            <person name="Westhof E."/>
            <person name="Wirth B."/>
            <person name="Zeniou-Meyer M."/>
            <person name="Zivanovic Y."/>
            <person name="Bolotin-Fukuhara M."/>
            <person name="Thierry A."/>
            <person name="Bouchier C."/>
            <person name="Caudron B."/>
            <person name="Scarpelli C."/>
            <person name="Gaillardin C."/>
            <person name="Weissenbach J."/>
            <person name="Wincker P."/>
            <person name="Souciet J.-L."/>
        </authorList>
    </citation>
    <scope>NUCLEOTIDE SEQUENCE [LARGE SCALE GENOMIC DNA]</scope>
    <source>
        <strain>ATCC 2001 / BCRC 20586 / JCM 3761 / NBRC 0622 / NRRL Y-65 / CBS 138</strain>
    </source>
</reference>
<protein>
    <recommendedName>
        <fullName>Acetyl-CoA hydrolase</fullName>
        <ecNumber>3.1.2.1</ecNumber>
    </recommendedName>
    <alternativeName>
        <fullName>Acetyl-CoA deacylase</fullName>
        <shortName>Acetyl-CoA acylase</shortName>
    </alternativeName>
</protein>
<comment type="function">
    <text evidence="1">Presumably involved in regulating the intracellular acetyl-CoA pool for fatty acid and cholesterol synthesis and fatty acid oxidation.</text>
</comment>
<comment type="catalytic activity">
    <reaction>
        <text>acetyl-CoA + H2O = acetate + CoA + H(+)</text>
        <dbReference type="Rhea" id="RHEA:20289"/>
        <dbReference type="ChEBI" id="CHEBI:15377"/>
        <dbReference type="ChEBI" id="CHEBI:15378"/>
        <dbReference type="ChEBI" id="CHEBI:30089"/>
        <dbReference type="ChEBI" id="CHEBI:57287"/>
        <dbReference type="ChEBI" id="CHEBI:57288"/>
        <dbReference type="EC" id="3.1.2.1"/>
    </reaction>
</comment>
<comment type="subcellular location">
    <subcellularLocation>
        <location evidence="1">Cytoplasm</location>
    </subcellularLocation>
</comment>
<comment type="similarity">
    <text evidence="3">Belongs to the acetyl-CoA hydrolase/transferase family.</text>
</comment>
<sequence>MTVSKLLKERVRYAPYLAKVKTPEELIPLFKNGQYLGWSGFTGVGTPKAVPDALIKHVEDNNLQGKLRFNLFVGASAGPEENKWAEHDMIIRRAPHQVGKPIAKAINNGKIQFFDKHLSMFPQDLTYGYYTRDRTDGKILDYMIIEATAIKEDGSIVPGPSVGGSPEFISVSDKVIIEVNTATPSFEGVHDIDMPVNPPHRVPYPYTKVDQKIGVDSIPVDPERVIAIVESKTRDQVGPNTPSDDMSKAIAGNLIEFFRNEVKHGRLPENLLPLQSGIGNIANAVIEGLTDANFKHLNVWTEVLQDSFLDLFENGSLDYATATSIRLTEPGFERVFKNWDFYKSRLCLRSQVVSNNPELIRRLGVIAMNTPVEADIYAHANSTNVNGSRMLNGLGGSADFLRNAKLSIMHCPAARPTKVDPTGISSIVPMVSHVDQTEHDLDVLVTDQGLADLRGLSPRERAREIINKCAHPDYKPLLQDYLDRAEHYATKHGCLHEPHMLKNAFKFHTNLAEKGTMKVESWDPVE</sequence>
<proteinExistence type="inferred from homology"/>
<dbReference type="EC" id="3.1.2.1"/>
<dbReference type="EMBL" id="CR380956">
    <property type="protein sequence ID" value="CAG60840.1"/>
    <property type="molecule type" value="Genomic_DNA"/>
</dbReference>
<dbReference type="RefSeq" id="XP_447891.1">
    <property type="nucleotide sequence ID" value="XM_447891.1"/>
</dbReference>
<dbReference type="SMR" id="Q6FPF3"/>
<dbReference type="FunCoup" id="Q6FPF3">
    <property type="interactions" value="232"/>
</dbReference>
<dbReference type="STRING" id="284593.Q6FPF3"/>
<dbReference type="EnsemblFungi" id="CAGL0J04268g-T">
    <property type="protein sequence ID" value="CAGL0J04268g-T-p1"/>
    <property type="gene ID" value="CAGL0J04268g"/>
</dbReference>
<dbReference type="KEGG" id="cgr:2889653"/>
<dbReference type="CGD" id="CAL0133538">
    <property type="gene designation" value="CAGL0J04268g"/>
</dbReference>
<dbReference type="VEuPathDB" id="FungiDB:B1J91_J04268g"/>
<dbReference type="VEuPathDB" id="FungiDB:CAGL0J04268g"/>
<dbReference type="eggNOG" id="KOG2828">
    <property type="taxonomic scope" value="Eukaryota"/>
</dbReference>
<dbReference type="HOGENOM" id="CLU_019748_3_0_1"/>
<dbReference type="InParanoid" id="Q6FPF3"/>
<dbReference type="OMA" id="SCIVPMV"/>
<dbReference type="Proteomes" id="UP000002428">
    <property type="component" value="Chromosome J"/>
</dbReference>
<dbReference type="GO" id="GO:0005829">
    <property type="term" value="C:cytosol"/>
    <property type="evidence" value="ECO:0007669"/>
    <property type="project" value="EnsemblFungi"/>
</dbReference>
<dbReference type="GO" id="GO:0005739">
    <property type="term" value="C:mitochondrion"/>
    <property type="evidence" value="ECO:0007669"/>
    <property type="project" value="EnsemblFungi"/>
</dbReference>
<dbReference type="GO" id="GO:0008775">
    <property type="term" value="F:acetate CoA-transferase activity"/>
    <property type="evidence" value="ECO:0007669"/>
    <property type="project" value="EnsemblFungi"/>
</dbReference>
<dbReference type="GO" id="GO:0003986">
    <property type="term" value="F:acetyl-CoA hydrolase activity"/>
    <property type="evidence" value="ECO:0007669"/>
    <property type="project" value="UniProtKB-EC"/>
</dbReference>
<dbReference type="GO" id="GO:0006083">
    <property type="term" value="P:acetate metabolic process"/>
    <property type="evidence" value="ECO:0007669"/>
    <property type="project" value="EnsemblFungi"/>
</dbReference>
<dbReference type="FunFam" id="3.30.750.70:FF:000002">
    <property type="entry name" value="Acetyl-CoA hydrolase Ach1"/>
    <property type="match status" value="1"/>
</dbReference>
<dbReference type="FunFam" id="3.40.1080.20:FF:000001">
    <property type="entry name" value="Acetyl-CoA hydrolase Ach1"/>
    <property type="match status" value="1"/>
</dbReference>
<dbReference type="FunFam" id="3.40.1080.10:FF:000003">
    <property type="entry name" value="Acetyl-coA hydrolase Ach1"/>
    <property type="match status" value="1"/>
</dbReference>
<dbReference type="Gene3D" id="3.30.750.70">
    <property type="entry name" value="4-hydroxybutyrate coenzyme like domains"/>
    <property type="match status" value="1"/>
</dbReference>
<dbReference type="Gene3D" id="3.40.1080.20">
    <property type="entry name" value="Acetyl-CoA hydrolase/transferase C-terminal domain"/>
    <property type="match status" value="1"/>
</dbReference>
<dbReference type="Gene3D" id="3.40.1080.10">
    <property type="entry name" value="Glutaconate Coenzyme A-transferase"/>
    <property type="match status" value="1"/>
</dbReference>
<dbReference type="InterPro" id="IPR026888">
    <property type="entry name" value="AcetylCoA_hyd_C"/>
</dbReference>
<dbReference type="InterPro" id="IPR038460">
    <property type="entry name" value="AcetylCoA_hyd_C_sf"/>
</dbReference>
<dbReference type="InterPro" id="IPR046433">
    <property type="entry name" value="ActCoA_hydro"/>
</dbReference>
<dbReference type="InterPro" id="IPR003702">
    <property type="entry name" value="ActCoA_hydro_N"/>
</dbReference>
<dbReference type="InterPro" id="IPR037171">
    <property type="entry name" value="NagB/RpiA_transferase-like"/>
</dbReference>
<dbReference type="PANTHER" id="PTHR43609">
    <property type="entry name" value="ACETYL-COA HYDROLASE"/>
    <property type="match status" value="1"/>
</dbReference>
<dbReference type="PANTHER" id="PTHR43609:SF1">
    <property type="entry name" value="ACETYL-COA HYDROLASE"/>
    <property type="match status" value="1"/>
</dbReference>
<dbReference type="Pfam" id="PF13336">
    <property type="entry name" value="AcetylCoA_hyd_C"/>
    <property type="match status" value="1"/>
</dbReference>
<dbReference type="Pfam" id="PF02550">
    <property type="entry name" value="AcetylCoA_hydro"/>
    <property type="match status" value="1"/>
</dbReference>
<dbReference type="SUPFAM" id="SSF100950">
    <property type="entry name" value="NagB/RpiA/CoA transferase-like"/>
    <property type="match status" value="2"/>
</dbReference>
<accession>Q6FPF3</accession>
<organism>
    <name type="scientific">Candida glabrata (strain ATCC 2001 / BCRC 20586 / JCM 3761 / NBRC 0622 / NRRL Y-65 / CBS 138)</name>
    <name type="common">Yeast</name>
    <name type="synonym">Nakaseomyces glabratus</name>
    <dbReference type="NCBI Taxonomy" id="284593"/>
    <lineage>
        <taxon>Eukaryota</taxon>
        <taxon>Fungi</taxon>
        <taxon>Dikarya</taxon>
        <taxon>Ascomycota</taxon>
        <taxon>Saccharomycotina</taxon>
        <taxon>Saccharomycetes</taxon>
        <taxon>Saccharomycetales</taxon>
        <taxon>Saccharomycetaceae</taxon>
        <taxon>Nakaseomyces</taxon>
    </lineage>
</organism>
<keyword id="KW-0963">Cytoplasm</keyword>
<keyword id="KW-0378">Hydrolase</keyword>
<keyword id="KW-1185">Reference proteome</keyword>
<feature type="chain" id="PRO_0000215518" description="Acetyl-CoA hydrolase">
    <location>
        <begin position="1"/>
        <end position="526"/>
    </location>
</feature>
<feature type="active site" description="5-glutamyl coenzyme A thioester intermediate" evidence="2">
    <location>
        <position position="302"/>
    </location>
</feature>
<feature type="binding site" evidence="2">
    <location>
        <begin position="277"/>
        <end position="281"/>
    </location>
    <ligand>
        <name>CoA</name>
        <dbReference type="ChEBI" id="CHEBI:57287"/>
    </ligand>
</feature>
<feature type="binding site" evidence="2">
    <location>
        <position position="392"/>
    </location>
    <ligand>
        <name>CoA</name>
        <dbReference type="ChEBI" id="CHEBI:57287"/>
    </ligand>
</feature>
<feature type="binding site" evidence="2">
    <location>
        <position position="396"/>
    </location>
    <ligand>
        <name>CoA</name>
        <dbReference type="ChEBI" id="CHEBI:57287"/>
    </ligand>
</feature>